<keyword id="KW-0067">ATP-binding</keyword>
<keyword id="KW-0143">Chaperone</keyword>
<keyword id="KW-0547">Nucleotide-binding</keyword>
<keyword id="KW-0597">Phosphoprotein</keyword>
<keyword id="KW-0346">Stress response</keyword>
<gene>
    <name evidence="1" type="primary">dnaK</name>
    <name type="ordered locus">PAM_704</name>
</gene>
<name>DNAK_ONYPE</name>
<reference key="1">
    <citation type="journal article" date="2004" name="Nat. Genet.">
        <title>Reductive evolution suggested from the complete genome sequence of a plant-pathogenic phytoplasma.</title>
        <authorList>
            <person name="Oshima K."/>
            <person name="Kakizawa S."/>
            <person name="Nishigawa H."/>
            <person name="Jung H.-Y."/>
            <person name="Wei W."/>
            <person name="Suzuki S."/>
            <person name="Arashida R."/>
            <person name="Nakata D."/>
            <person name="Miyata S."/>
            <person name="Ugaki M."/>
            <person name="Namba S."/>
        </authorList>
    </citation>
    <scope>NUCLEOTIDE SEQUENCE [LARGE SCALE GENOMIC DNA]</scope>
    <source>
        <strain>OY-M</strain>
    </source>
</reference>
<sequence length="615" mass="66958">MTKTNKIIGIDLGTTNSCVAVMEGGEAKVIPNAEGGRTTPSVVSFKGDEIMVGEIAKRQVITNPNTISSIKRHMGEANYTVNVGGKKYTPQEISAMILANLKKTAEDYLGAQVSEAVITVPAYFNDAQRQATKDAGKIAGLNVKRIINEPTAAALSYGVDKGDKEQTILVFDLGGGTFDVSILTLVDGTFEVLSTSGDNALGGDDFDLRIVDFLVQEFKKENSVDLSKDKMAMQRLKDAAEKAKKELSGVTSSQISLPFLTMSEAGPLHLEYNMTRAKFNELTKDLIDRCLAPVKRALGDAKLDIEKIDQVLLVGGSTRIPAVQDLVKNELKKTPNKSINPDEVVGIGAAIQGGILSGDVKDILTLLDVTPLSLGIETLGNVFTKLIERNSTIPTSEKQVFSTAADNLPAVDIHVLQGERPLAADNKTLGRFQLTDRPPHRAEFLKLKITFDLDANGIVSVKAKDLGTNKEQKITISGSGALKEEEIQRMIREAEENAEVDRVKKESIDARNEAENMIFHTKKSLEDLKADVTPEEKDKVETQIKELEEALKGDDTALIKEKTASLTKESQGIAMKAYQKAQEKQAQEKGTQENTTAKNEKPQDEVVDADFEEKK</sequence>
<evidence type="ECO:0000255" key="1">
    <source>
        <dbReference type="HAMAP-Rule" id="MF_00332"/>
    </source>
</evidence>
<evidence type="ECO:0000256" key="2">
    <source>
        <dbReference type="SAM" id="MobiDB-lite"/>
    </source>
</evidence>
<evidence type="ECO:0000305" key="3"/>
<comment type="function">
    <text evidence="1">Acts as a chaperone.</text>
</comment>
<comment type="induction">
    <text evidence="1">By stress conditions e.g. heat shock.</text>
</comment>
<comment type="similarity">
    <text evidence="1">Belongs to the heat shock protein 70 family.</text>
</comment>
<comment type="sequence caution" evidence="3">
    <conflict type="erroneous initiation">
        <sequence resource="EMBL-CDS" id="BAD04789"/>
    </conflict>
</comment>
<feature type="chain" id="PRO_0000225988" description="Chaperone protein DnaK">
    <location>
        <begin position="1"/>
        <end position="615"/>
    </location>
</feature>
<feature type="region of interest" description="Disordered" evidence="2">
    <location>
        <begin position="567"/>
        <end position="615"/>
    </location>
</feature>
<feature type="compositionally biased region" description="Basic and acidic residues" evidence="2">
    <location>
        <begin position="581"/>
        <end position="591"/>
    </location>
</feature>
<feature type="compositionally biased region" description="Acidic residues" evidence="2">
    <location>
        <begin position="605"/>
        <end position="615"/>
    </location>
</feature>
<feature type="modified residue" description="Phosphothreonine; by autocatalysis" evidence="1">
    <location>
        <position position="177"/>
    </location>
</feature>
<accession>Q6YPM1</accession>
<protein>
    <recommendedName>
        <fullName evidence="1">Chaperone protein DnaK</fullName>
    </recommendedName>
    <alternativeName>
        <fullName evidence="1">HSP70</fullName>
    </alternativeName>
    <alternativeName>
        <fullName evidence="1">Heat shock 70 kDa protein</fullName>
    </alternativeName>
    <alternativeName>
        <fullName evidence="1">Heat shock protein 70</fullName>
    </alternativeName>
</protein>
<proteinExistence type="inferred from homology"/>
<organism>
    <name type="scientific">Onion yellows phytoplasma (strain OY-M)</name>
    <dbReference type="NCBI Taxonomy" id="262768"/>
    <lineage>
        <taxon>Bacteria</taxon>
        <taxon>Bacillati</taxon>
        <taxon>Mycoplasmatota</taxon>
        <taxon>Mollicutes</taxon>
        <taxon>Acholeplasmatales</taxon>
        <taxon>Acholeplasmataceae</taxon>
        <taxon>Candidatus Phytoplasma</taxon>
        <taxon>16SrI (Aster yellows group)</taxon>
    </lineage>
</organism>
<dbReference type="EMBL" id="AP006628">
    <property type="protein sequence ID" value="BAD04789.1"/>
    <property type="status" value="ALT_INIT"/>
    <property type="molecule type" value="Genomic_DNA"/>
</dbReference>
<dbReference type="SMR" id="Q6YPM1"/>
<dbReference type="STRING" id="262768.PAM_704"/>
<dbReference type="KEGG" id="poy:PAM_704"/>
<dbReference type="eggNOG" id="COG0443">
    <property type="taxonomic scope" value="Bacteria"/>
</dbReference>
<dbReference type="HOGENOM" id="CLU_005965_2_4_14"/>
<dbReference type="BioCyc" id="OYEL262768:G1G26-857-MONOMER"/>
<dbReference type="Proteomes" id="UP000002523">
    <property type="component" value="Chromosome"/>
</dbReference>
<dbReference type="GO" id="GO:0005524">
    <property type="term" value="F:ATP binding"/>
    <property type="evidence" value="ECO:0007669"/>
    <property type="project" value="UniProtKB-UniRule"/>
</dbReference>
<dbReference type="GO" id="GO:0140662">
    <property type="term" value="F:ATP-dependent protein folding chaperone"/>
    <property type="evidence" value="ECO:0007669"/>
    <property type="project" value="InterPro"/>
</dbReference>
<dbReference type="GO" id="GO:0051082">
    <property type="term" value="F:unfolded protein binding"/>
    <property type="evidence" value="ECO:0007669"/>
    <property type="project" value="InterPro"/>
</dbReference>
<dbReference type="CDD" id="cd10234">
    <property type="entry name" value="ASKHA_NBD_HSP70_DnaK-like"/>
    <property type="match status" value="1"/>
</dbReference>
<dbReference type="FunFam" id="1.20.1270.10:FF:000001">
    <property type="entry name" value="Molecular chaperone DnaK"/>
    <property type="match status" value="1"/>
</dbReference>
<dbReference type="FunFam" id="3.30.420.40:FF:000071">
    <property type="entry name" value="Molecular chaperone DnaK"/>
    <property type="match status" value="1"/>
</dbReference>
<dbReference type="FunFam" id="3.90.640.10:FF:000003">
    <property type="entry name" value="Molecular chaperone DnaK"/>
    <property type="match status" value="1"/>
</dbReference>
<dbReference type="Gene3D" id="1.20.1270.10">
    <property type="match status" value="1"/>
</dbReference>
<dbReference type="Gene3D" id="3.30.420.40">
    <property type="match status" value="2"/>
</dbReference>
<dbReference type="Gene3D" id="3.90.640.10">
    <property type="entry name" value="Actin, Chain A, domain 4"/>
    <property type="match status" value="1"/>
</dbReference>
<dbReference type="Gene3D" id="2.60.34.10">
    <property type="entry name" value="Substrate Binding Domain Of DNAk, Chain A, domain 1"/>
    <property type="match status" value="1"/>
</dbReference>
<dbReference type="HAMAP" id="MF_00332">
    <property type="entry name" value="DnaK"/>
    <property type="match status" value="1"/>
</dbReference>
<dbReference type="InterPro" id="IPR043129">
    <property type="entry name" value="ATPase_NBD"/>
</dbReference>
<dbReference type="InterPro" id="IPR012725">
    <property type="entry name" value="Chaperone_DnaK"/>
</dbReference>
<dbReference type="InterPro" id="IPR018181">
    <property type="entry name" value="Heat_shock_70_CS"/>
</dbReference>
<dbReference type="InterPro" id="IPR029048">
    <property type="entry name" value="HSP70_C_sf"/>
</dbReference>
<dbReference type="InterPro" id="IPR029047">
    <property type="entry name" value="HSP70_peptide-bd_sf"/>
</dbReference>
<dbReference type="InterPro" id="IPR013126">
    <property type="entry name" value="Hsp_70_fam"/>
</dbReference>
<dbReference type="NCBIfam" id="NF001413">
    <property type="entry name" value="PRK00290.1"/>
    <property type="match status" value="1"/>
</dbReference>
<dbReference type="NCBIfam" id="TIGR02350">
    <property type="entry name" value="prok_dnaK"/>
    <property type="match status" value="1"/>
</dbReference>
<dbReference type="PANTHER" id="PTHR19375">
    <property type="entry name" value="HEAT SHOCK PROTEIN 70KDA"/>
    <property type="match status" value="1"/>
</dbReference>
<dbReference type="Pfam" id="PF00012">
    <property type="entry name" value="HSP70"/>
    <property type="match status" value="1"/>
</dbReference>
<dbReference type="PRINTS" id="PR00301">
    <property type="entry name" value="HEATSHOCK70"/>
</dbReference>
<dbReference type="SUPFAM" id="SSF53067">
    <property type="entry name" value="Actin-like ATPase domain"/>
    <property type="match status" value="2"/>
</dbReference>
<dbReference type="SUPFAM" id="SSF100934">
    <property type="entry name" value="Heat shock protein 70kD (HSP70), C-terminal subdomain"/>
    <property type="match status" value="1"/>
</dbReference>
<dbReference type="SUPFAM" id="SSF100920">
    <property type="entry name" value="Heat shock protein 70kD (HSP70), peptide-binding domain"/>
    <property type="match status" value="1"/>
</dbReference>
<dbReference type="PROSITE" id="PS00297">
    <property type="entry name" value="HSP70_1"/>
    <property type="match status" value="1"/>
</dbReference>
<dbReference type="PROSITE" id="PS00329">
    <property type="entry name" value="HSP70_2"/>
    <property type="match status" value="1"/>
</dbReference>
<dbReference type="PROSITE" id="PS01036">
    <property type="entry name" value="HSP70_3"/>
    <property type="match status" value="1"/>
</dbReference>